<sequence>MDAKQIAQFIDHTALTAEKTEQDIIQLCDEAITHQFWSVCINSAYIPLAKQKLAGTPVKICTVVGFPLGANLSTVKAFETTEAIKAGADEIDMVINVGWIKSNKWDAVEKDIATVLAACAGKPLKVILETCLLSKDEIVKACEICKTLNVAFVKTSTGFNRGGATKEDVALMKRTVGDIGVKASGGVRDTETAIAMINAGASRIGASAGIAIIHGLQDVSSTY</sequence>
<gene>
    <name evidence="1" type="primary">deoC</name>
    <name type="ordered locus">PM1343</name>
</gene>
<protein>
    <recommendedName>
        <fullName evidence="1">Deoxyribose-phosphate aldolase</fullName>
        <shortName evidence="1">DERA</shortName>
        <ecNumber evidence="1">4.1.2.4</ecNumber>
    </recommendedName>
    <alternativeName>
        <fullName evidence="1">2-deoxy-D-ribose 5-phosphate aldolase</fullName>
    </alternativeName>
    <alternativeName>
        <fullName evidence="1">Phosphodeoxyriboaldolase</fullName>
        <shortName evidence="1">Deoxyriboaldolase</shortName>
    </alternativeName>
</protein>
<evidence type="ECO:0000255" key="1">
    <source>
        <dbReference type="HAMAP-Rule" id="MF_00114"/>
    </source>
</evidence>
<evidence type="ECO:0000305" key="2"/>
<comment type="function">
    <text evidence="1">Catalyzes a reversible aldol reaction between acetaldehyde and D-glyceraldehyde 3-phosphate to generate 2-deoxy-D-ribose 5-phosphate.</text>
</comment>
<comment type="catalytic activity">
    <reaction evidence="1">
        <text>2-deoxy-D-ribose 5-phosphate = D-glyceraldehyde 3-phosphate + acetaldehyde</text>
        <dbReference type="Rhea" id="RHEA:12821"/>
        <dbReference type="ChEBI" id="CHEBI:15343"/>
        <dbReference type="ChEBI" id="CHEBI:59776"/>
        <dbReference type="ChEBI" id="CHEBI:62877"/>
        <dbReference type="EC" id="4.1.2.4"/>
    </reaction>
</comment>
<comment type="pathway">
    <text evidence="1">Carbohydrate degradation; 2-deoxy-D-ribose 1-phosphate degradation; D-glyceraldehyde 3-phosphate and acetaldehyde from 2-deoxy-alpha-D-ribose 1-phosphate: step 2/2.</text>
</comment>
<comment type="subcellular location">
    <subcellularLocation>
        <location evidence="1">Cytoplasm</location>
    </subcellularLocation>
</comment>
<comment type="similarity">
    <text evidence="1 2">Belongs to the DeoC/FbaB aldolase family. DeoC type 1 subfamily.</text>
</comment>
<organism>
    <name type="scientific">Pasteurella multocida (strain Pm70)</name>
    <dbReference type="NCBI Taxonomy" id="272843"/>
    <lineage>
        <taxon>Bacteria</taxon>
        <taxon>Pseudomonadati</taxon>
        <taxon>Pseudomonadota</taxon>
        <taxon>Gammaproteobacteria</taxon>
        <taxon>Pasteurellales</taxon>
        <taxon>Pasteurellaceae</taxon>
        <taxon>Pasteurella</taxon>
    </lineage>
</organism>
<accession>P57937</accession>
<dbReference type="EC" id="4.1.2.4" evidence="1"/>
<dbReference type="EMBL" id="AE004439">
    <property type="protein sequence ID" value="AAK03427.1"/>
    <property type="molecule type" value="Genomic_DNA"/>
</dbReference>
<dbReference type="RefSeq" id="WP_005754869.1">
    <property type="nucleotide sequence ID" value="NC_002663.1"/>
</dbReference>
<dbReference type="SMR" id="P57937"/>
<dbReference type="STRING" id="272843.PM1343"/>
<dbReference type="EnsemblBacteria" id="AAK03427">
    <property type="protein sequence ID" value="AAK03427"/>
    <property type="gene ID" value="PM1343"/>
</dbReference>
<dbReference type="GeneID" id="77206690"/>
<dbReference type="KEGG" id="pmu:PM1343"/>
<dbReference type="PATRIC" id="fig|272843.6.peg.1355"/>
<dbReference type="HOGENOM" id="CLU_053595_0_1_6"/>
<dbReference type="OrthoDB" id="6579831at2"/>
<dbReference type="UniPathway" id="UPA00002">
    <property type="reaction ID" value="UER00468"/>
</dbReference>
<dbReference type="Proteomes" id="UP000000809">
    <property type="component" value="Chromosome"/>
</dbReference>
<dbReference type="GO" id="GO:0005737">
    <property type="term" value="C:cytoplasm"/>
    <property type="evidence" value="ECO:0007669"/>
    <property type="project" value="UniProtKB-SubCell"/>
</dbReference>
<dbReference type="GO" id="GO:0004139">
    <property type="term" value="F:deoxyribose-phosphate aldolase activity"/>
    <property type="evidence" value="ECO:0007669"/>
    <property type="project" value="UniProtKB-UniRule"/>
</dbReference>
<dbReference type="GO" id="GO:0006018">
    <property type="term" value="P:2-deoxyribose 1-phosphate catabolic process"/>
    <property type="evidence" value="ECO:0007669"/>
    <property type="project" value="UniProtKB-UniRule"/>
</dbReference>
<dbReference type="GO" id="GO:0016052">
    <property type="term" value="P:carbohydrate catabolic process"/>
    <property type="evidence" value="ECO:0007669"/>
    <property type="project" value="TreeGrafter"/>
</dbReference>
<dbReference type="GO" id="GO:0009264">
    <property type="term" value="P:deoxyribonucleotide catabolic process"/>
    <property type="evidence" value="ECO:0007669"/>
    <property type="project" value="InterPro"/>
</dbReference>
<dbReference type="CDD" id="cd00959">
    <property type="entry name" value="DeoC"/>
    <property type="match status" value="1"/>
</dbReference>
<dbReference type="FunFam" id="3.20.20.70:FF:000044">
    <property type="entry name" value="Deoxyribose-phosphate aldolase"/>
    <property type="match status" value="1"/>
</dbReference>
<dbReference type="Gene3D" id="3.20.20.70">
    <property type="entry name" value="Aldolase class I"/>
    <property type="match status" value="1"/>
</dbReference>
<dbReference type="HAMAP" id="MF_00114">
    <property type="entry name" value="DeoC_type1"/>
    <property type="match status" value="1"/>
</dbReference>
<dbReference type="InterPro" id="IPR013785">
    <property type="entry name" value="Aldolase_TIM"/>
</dbReference>
<dbReference type="InterPro" id="IPR011343">
    <property type="entry name" value="DeoC"/>
</dbReference>
<dbReference type="InterPro" id="IPR002915">
    <property type="entry name" value="DeoC/FbaB/LacD_aldolase"/>
</dbReference>
<dbReference type="InterPro" id="IPR028581">
    <property type="entry name" value="DeoC_typeI"/>
</dbReference>
<dbReference type="NCBIfam" id="TIGR00126">
    <property type="entry name" value="deoC"/>
    <property type="match status" value="1"/>
</dbReference>
<dbReference type="PANTHER" id="PTHR10889">
    <property type="entry name" value="DEOXYRIBOSE-PHOSPHATE ALDOLASE"/>
    <property type="match status" value="1"/>
</dbReference>
<dbReference type="PANTHER" id="PTHR10889:SF1">
    <property type="entry name" value="DEOXYRIBOSE-PHOSPHATE ALDOLASE"/>
    <property type="match status" value="1"/>
</dbReference>
<dbReference type="Pfam" id="PF01791">
    <property type="entry name" value="DeoC"/>
    <property type="match status" value="1"/>
</dbReference>
<dbReference type="PIRSF" id="PIRSF001357">
    <property type="entry name" value="DeoC"/>
    <property type="match status" value="1"/>
</dbReference>
<dbReference type="SMART" id="SM01133">
    <property type="entry name" value="DeoC"/>
    <property type="match status" value="1"/>
</dbReference>
<dbReference type="SUPFAM" id="SSF51569">
    <property type="entry name" value="Aldolase"/>
    <property type="match status" value="1"/>
</dbReference>
<feature type="chain" id="PRO_0000057252" description="Deoxyribose-phosphate aldolase">
    <location>
        <begin position="1"/>
        <end position="223"/>
    </location>
</feature>
<feature type="active site" description="Proton donor/acceptor" evidence="1">
    <location>
        <position position="92"/>
    </location>
</feature>
<feature type="active site" description="Schiff-base intermediate with acetaldehyde" evidence="1">
    <location>
        <position position="154"/>
    </location>
</feature>
<feature type="active site" description="Proton donor/acceptor" evidence="1">
    <location>
        <position position="182"/>
    </location>
</feature>
<proteinExistence type="inferred from homology"/>
<keyword id="KW-0963">Cytoplasm</keyword>
<keyword id="KW-0456">Lyase</keyword>
<keyword id="KW-1185">Reference proteome</keyword>
<keyword id="KW-0704">Schiff base</keyword>
<reference key="1">
    <citation type="journal article" date="2001" name="Proc. Natl. Acad. Sci. U.S.A.">
        <title>Complete genomic sequence of Pasteurella multocida Pm70.</title>
        <authorList>
            <person name="May B.J."/>
            <person name="Zhang Q."/>
            <person name="Li L.L."/>
            <person name="Paustian M.L."/>
            <person name="Whittam T.S."/>
            <person name="Kapur V."/>
        </authorList>
    </citation>
    <scope>NUCLEOTIDE SEQUENCE [LARGE SCALE GENOMIC DNA]</scope>
    <source>
        <strain>Pm70</strain>
    </source>
</reference>
<name>DEOC_PASMU</name>